<reference key="1">
    <citation type="journal article" date="2008" name="J. Bacteriol.">
        <title>Genome sequence of Lactobacillus helveticus: an organism distinguished by selective gene loss and IS element expansion.</title>
        <authorList>
            <person name="Callanan M."/>
            <person name="Kaleta P."/>
            <person name="O'Callaghan J."/>
            <person name="O'Sullivan O."/>
            <person name="Jordan K."/>
            <person name="McAuliffe O."/>
            <person name="Sangrador-Vegas A."/>
            <person name="Slattery L."/>
            <person name="Fitzgerald G.F."/>
            <person name="Beresford T."/>
            <person name="Ross R.P."/>
        </authorList>
    </citation>
    <scope>NUCLEOTIDE SEQUENCE [LARGE SCALE GENOMIC DNA]</scope>
    <source>
        <strain>DPC 4571</strain>
    </source>
</reference>
<protein>
    <recommendedName>
        <fullName evidence="1">Large ribosomal subunit protein bL33B</fullName>
    </recommendedName>
    <alternativeName>
        <fullName evidence="1">50S ribosomal protein L33 2</fullName>
    </alternativeName>
</protein>
<gene>
    <name evidence="1" type="primary">rpmG2</name>
    <name type="ordered locus">lhv_2304</name>
</gene>
<sequence length="49" mass="5529">MAVKKAALACSVCGSRNYSITASKNRTKRLELKKFCKHCGKMTLHKETR</sequence>
<keyword id="KW-0687">Ribonucleoprotein</keyword>
<keyword id="KW-0689">Ribosomal protein</keyword>
<name>RL332_LACH4</name>
<dbReference type="EMBL" id="CP000517">
    <property type="protein sequence ID" value="ABX26595.1"/>
    <property type="molecule type" value="Genomic_DNA"/>
</dbReference>
<dbReference type="SMR" id="A8YTD9"/>
<dbReference type="KEGG" id="lhe:lhv_2304"/>
<dbReference type="eggNOG" id="COG0267">
    <property type="taxonomic scope" value="Bacteria"/>
</dbReference>
<dbReference type="HOGENOM" id="CLU_190949_0_1_9"/>
<dbReference type="Proteomes" id="UP000000790">
    <property type="component" value="Chromosome"/>
</dbReference>
<dbReference type="GO" id="GO:0005737">
    <property type="term" value="C:cytoplasm"/>
    <property type="evidence" value="ECO:0007669"/>
    <property type="project" value="UniProtKB-ARBA"/>
</dbReference>
<dbReference type="GO" id="GO:1990904">
    <property type="term" value="C:ribonucleoprotein complex"/>
    <property type="evidence" value="ECO:0007669"/>
    <property type="project" value="UniProtKB-KW"/>
</dbReference>
<dbReference type="GO" id="GO:0005840">
    <property type="term" value="C:ribosome"/>
    <property type="evidence" value="ECO:0007669"/>
    <property type="project" value="UniProtKB-KW"/>
</dbReference>
<dbReference type="GO" id="GO:0003735">
    <property type="term" value="F:structural constituent of ribosome"/>
    <property type="evidence" value="ECO:0007669"/>
    <property type="project" value="InterPro"/>
</dbReference>
<dbReference type="GO" id="GO:0006412">
    <property type="term" value="P:translation"/>
    <property type="evidence" value="ECO:0007669"/>
    <property type="project" value="UniProtKB-UniRule"/>
</dbReference>
<dbReference type="Gene3D" id="2.20.28.120">
    <property type="entry name" value="Ribosomal protein L33"/>
    <property type="match status" value="1"/>
</dbReference>
<dbReference type="HAMAP" id="MF_00294">
    <property type="entry name" value="Ribosomal_bL33"/>
    <property type="match status" value="1"/>
</dbReference>
<dbReference type="InterPro" id="IPR001705">
    <property type="entry name" value="Ribosomal_bL33"/>
</dbReference>
<dbReference type="InterPro" id="IPR038584">
    <property type="entry name" value="Ribosomal_bL33_sf"/>
</dbReference>
<dbReference type="InterPro" id="IPR011332">
    <property type="entry name" value="Ribosomal_zn-bd"/>
</dbReference>
<dbReference type="NCBIfam" id="NF001764">
    <property type="entry name" value="PRK00504.1"/>
    <property type="match status" value="1"/>
</dbReference>
<dbReference type="NCBIfam" id="TIGR01023">
    <property type="entry name" value="rpmG_bact"/>
    <property type="match status" value="1"/>
</dbReference>
<dbReference type="Pfam" id="PF00471">
    <property type="entry name" value="Ribosomal_L33"/>
    <property type="match status" value="1"/>
</dbReference>
<dbReference type="SUPFAM" id="SSF57829">
    <property type="entry name" value="Zn-binding ribosomal proteins"/>
    <property type="match status" value="1"/>
</dbReference>
<accession>A8YTD9</accession>
<feature type="chain" id="PRO_0000356505" description="Large ribosomal subunit protein bL33B">
    <location>
        <begin position="1"/>
        <end position="49"/>
    </location>
</feature>
<organism>
    <name type="scientific">Lactobacillus helveticus (strain DPC 4571)</name>
    <dbReference type="NCBI Taxonomy" id="405566"/>
    <lineage>
        <taxon>Bacteria</taxon>
        <taxon>Bacillati</taxon>
        <taxon>Bacillota</taxon>
        <taxon>Bacilli</taxon>
        <taxon>Lactobacillales</taxon>
        <taxon>Lactobacillaceae</taxon>
        <taxon>Lactobacillus</taxon>
    </lineage>
</organism>
<comment type="similarity">
    <text evidence="1">Belongs to the bacterial ribosomal protein bL33 family.</text>
</comment>
<evidence type="ECO:0000255" key="1">
    <source>
        <dbReference type="HAMAP-Rule" id="MF_00294"/>
    </source>
</evidence>
<proteinExistence type="inferred from homology"/>